<evidence type="ECO:0000255" key="1">
    <source>
        <dbReference type="HAMAP-Rule" id="MF_00175"/>
    </source>
</evidence>
<evidence type="ECO:0000255" key="2">
    <source>
        <dbReference type="PROSITE-ProRule" id="PRU01250"/>
    </source>
</evidence>
<comment type="function">
    <text evidence="1">ATP-dependent specificity component of the Clp protease. It directs the protease to specific substrates. Can perform chaperone functions in the absence of ClpP.</text>
</comment>
<comment type="subunit">
    <text evidence="1">Component of the ClpX-ClpP complex. Forms a hexameric ring that, in the presence of ATP, binds to fourteen ClpP subunits assembled into a disk-like structure with a central cavity, resembling the structure of eukaryotic proteasomes.</text>
</comment>
<comment type="similarity">
    <text evidence="1">Belongs to the ClpX chaperone family.</text>
</comment>
<name>CLPX_GEOTN</name>
<feature type="chain" id="PRO_1000024562" description="ATP-dependent Clp protease ATP-binding subunit ClpX">
    <location>
        <begin position="1"/>
        <end position="421"/>
    </location>
</feature>
<feature type="domain" description="ClpX-type ZB" evidence="2">
    <location>
        <begin position="1"/>
        <end position="54"/>
    </location>
</feature>
<feature type="binding site" evidence="2">
    <location>
        <position position="13"/>
    </location>
    <ligand>
        <name>Zn(2+)</name>
        <dbReference type="ChEBI" id="CHEBI:29105"/>
    </ligand>
</feature>
<feature type="binding site" evidence="2">
    <location>
        <position position="16"/>
    </location>
    <ligand>
        <name>Zn(2+)</name>
        <dbReference type="ChEBI" id="CHEBI:29105"/>
    </ligand>
</feature>
<feature type="binding site" evidence="2">
    <location>
        <position position="35"/>
    </location>
    <ligand>
        <name>Zn(2+)</name>
        <dbReference type="ChEBI" id="CHEBI:29105"/>
    </ligand>
</feature>
<feature type="binding site" evidence="2">
    <location>
        <position position="38"/>
    </location>
    <ligand>
        <name>Zn(2+)</name>
        <dbReference type="ChEBI" id="CHEBI:29105"/>
    </ligand>
</feature>
<feature type="binding site" evidence="1">
    <location>
        <begin position="117"/>
        <end position="124"/>
    </location>
    <ligand>
        <name>ATP</name>
        <dbReference type="ChEBI" id="CHEBI:30616"/>
    </ligand>
</feature>
<dbReference type="EMBL" id="CP000557">
    <property type="protein sequence ID" value="ABO67926.1"/>
    <property type="molecule type" value="Genomic_DNA"/>
</dbReference>
<dbReference type="RefSeq" id="WP_011887922.1">
    <property type="nucleotide sequence ID" value="NC_009328.1"/>
</dbReference>
<dbReference type="SMR" id="A4IRH2"/>
<dbReference type="GeneID" id="87623271"/>
<dbReference type="KEGG" id="gtn:GTNG_2581"/>
<dbReference type="eggNOG" id="COG1219">
    <property type="taxonomic scope" value="Bacteria"/>
</dbReference>
<dbReference type="HOGENOM" id="CLU_014218_8_2_9"/>
<dbReference type="Proteomes" id="UP000001578">
    <property type="component" value="Chromosome"/>
</dbReference>
<dbReference type="GO" id="GO:0009376">
    <property type="term" value="C:HslUV protease complex"/>
    <property type="evidence" value="ECO:0007669"/>
    <property type="project" value="TreeGrafter"/>
</dbReference>
<dbReference type="GO" id="GO:0005524">
    <property type="term" value="F:ATP binding"/>
    <property type="evidence" value="ECO:0007669"/>
    <property type="project" value="UniProtKB-UniRule"/>
</dbReference>
<dbReference type="GO" id="GO:0016887">
    <property type="term" value="F:ATP hydrolysis activity"/>
    <property type="evidence" value="ECO:0007669"/>
    <property type="project" value="InterPro"/>
</dbReference>
<dbReference type="GO" id="GO:0140662">
    <property type="term" value="F:ATP-dependent protein folding chaperone"/>
    <property type="evidence" value="ECO:0007669"/>
    <property type="project" value="InterPro"/>
</dbReference>
<dbReference type="GO" id="GO:0046983">
    <property type="term" value="F:protein dimerization activity"/>
    <property type="evidence" value="ECO:0007669"/>
    <property type="project" value="InterPro"/>
</dbReference>
<dbReference type="GO" id="GO:0051082">
    <property type="term" value="F:unfolded protein binding"/>
    <property type="evidence" value="ECO:0007669"/>
    <property type="project" value="UniProtKB-UniRule"/>
</dbReference>
<dbReference type="GO" id="GO:0008270">
    <property type="term" value="F:zinc ion binding"/>
    <property type="evidence" value="ECO:0007669"/>
    <property type="project" value="InterPro"/>
</dbReference>
<dbReference type="GO" id="GO:0051301">
    <property type="term" value="P:cell division"/>
    <property type="evidence" value="ECO:0007669"/>
    <property type="project" value="TreeGrafter"/>
</dbReference>
<dbReference type="GO" id="GO:0051603">
    <property type="term" value="P:proteolysis involved in protein catabolic process"/>
    <property type="evidence" value="ECO:0007669"/>
    <property type="project" value="TreeGrafter"/>
</dbReference>
<dbReference type="CDD" id="cd19497">
    <property type="entry name" value="RecA-like_ClpX"/>
    <property type="match status" value="1"/>
</dbReference>
<dbReference type="FunFam" id="1.10.8.60:FF:000002">
    <property type="entry name" value="ATP-dependent Clp protease ATP-binding subunit ClpX"/>
    <property type="match status" value="1"/>
</dbReference>
<dbReference type="FunFam" id="3.40.50.300:FF:000005">
    <property type="entry name" value="ATP-dependent Clp protease ATP-binding subunit ClpX"/>
    <property type="match status" value="1"/>
</dbReference>
<dbReference type="Gene3D" id="1.10.8.60">
    <property type="match status" value="1"/>
</dbReference>
<dbReference type="Gene3D" id="6.20.220.10">
    <property type="entry name" value="ClpX chaperone, C4-type zinc finger domain"/>
    <property type="match status" value="1"/>
</dbReference>
<dbReference type="Gene3D" id="3.40.50.300">
    <property type="entry name" value="P-loop containing nucleotide triphosphate hydrolases"/>
    <property type="match status" value="1"/>
</dbReference>
<dbReference type="HAMAP" id="MF_00175">
    <property type="entry name" value="ClpX"/>
    <property type="match status" value="1"/>
</dbReference>
<dbReference type="InterPro" id="IPR003593">
    <property type="entry name" value="AAA+_ATPase"/>
</dbReference>
<dbReference type="InterPro" id="IPR050052">
    <property type="entry name" value="ATP-dep_Clp_protease_ClpX"/>
</dbReference>
<dbReference type="InterPro" id="IPR003959">
    <property type="entry name" value="ATPase_AAA_core"/>
</dbReference>
<dbReference type="InterPro" id="IPR019489">
    <property type="entry name" value="Clp_ATPase_C"/>
</dbReference>
<dbReference type="InterPro" id="IPR004487">
    <property type="entry name" value="Clp_protease_ATP-bd_su_ClpX"/>
</dbReference>
<dbReference type="InterPro" id="IPR046425">
    <property type="entry name" value="ClpX_bact"/>
</dbReference>
<dbReference type="InterPro" id="IPR027417">
    <property type="entry name" value="P-loop_NTPase"/>
</dbReference>
<dbReference type="InterPro" id="IPR010603">
    <property type="entry name" value="Znf_CppX_C4"/>
</dbReference>
<dbReference type="InterPro" id="IPR038366">
    <property type="entry name" value="Znf_CppX_C4_sf"/>
</dbReference>
<dbReference type="NCBIfam" id="TIGR00382">
    <property type="entry name" value="clpX"/>
    <property type="match status" value="1"/>
</dbReference>
<dbReference type="NCBIfam" id="NF003745">
    <property type="entry name" value="PRK05342.1"/>
    <property type="match status" value="1"/>
</dbReference>
<dbReference type="PANTHER" id="PTHR48102:SF7">
    <property type="entry name" value="ATP-DEPENDENT CLP PROTEASE ATP-BINDING SUBUNIT CLPX-LIKE, MITOCHONDRIAL"/>
    <property type="match status" value="1"/>
</dbReference>
<dbReference type="PANTHER" id="PTHR48102">
    <property type="entry name" value="ATP-DEPENDENT CLP PROTEASE ATP-BINDING SUBUNIT CLPX-LIKE, MITOCHONDRIAL-RELATED"/>
    <property type="match status" value="1"/>
</dbReference>
<dbReference type="Pfam" id="PF07724">
    <property type="entry name" value="AAA_2"/>
    <property type="match status" value="1"/>
</dbReference>
<dbReference type="Pfam" id="PF10431">
    <property type="entry name" value="ClpB_D2-small"/>
    <property type="match status" value="1"/>
</dbReference>
<dbReference type="Pfam" id="PF06689">
    <property type="entry name" value="zf-C4_ClpX"/>
    <property type="match status" value="1"/>
</dbReference>
<dbReference type="SMART" id="SM00382">
    <property type="entry name" value="AAA"/>
    <property type="match status" value="1"/>
</dbReference>
<dbReference type="SMART" id="SM01086">
    <property type="entry name" value="ClpB_D2-small"/>
    <property type="match status" value="1"/>
</dbReference>
<dbReference type="SMART" id="SM00994">
    <property type="entry name" value="zf-C4_ClpX"/>
    <property type="match status" value="1"/>
</dbReference>
<dbReference type="SUPFAM" id="SSF57716">
    <property type="entry name" value="Glucocorticoid receptor-like (DNA-binding domain)"/>
    <property type="match status" value="1"/>
</dbReference>
<dbReference type="SUPFAM" id="SSF52540">
    <property type="entry name" value="P-loop containing nucleoside triphosphate hydrolases"/>
    <property type="match status" value="1"/>
</dbReference>
<dbReference type="PROSITE" id="PS51902">
    <property type="entry name" value="CLPX_ZB"/>
    <property type="match status" value="1"/>
</dbReference>
<gene>
    <name evidence="1" type="primary">clpX</name>
    <name type="ordered locus">GTNG_2581</name>
</gene>
<reference key="1">
    <citation type="journal article" date="2007" name="Proc. Natl. Acad. Sci. U.S.A.">
        <title>Genome and proteome of long-chain alkane degrading Geobacillus thermodenitrificans NG80-2 isolated from a deep-subsurface oil reservoir.</title>
        <authorList>
            <person name="Feng L."/>
            <person name="Wang W."/>
            <person name="Cheng J."/>
            <person name="Ren Y."/>
            <person name="Zhao G."/>
            <person name="Gao C."/>
            <person name="Tang Y."/>
            <person name="Liu X."/>
            <person name="Han W."/>
            <person name="Peng X."/>
            <person name="Liu R."/>
            <person name="Wang L."/>
        </authorList>
    </citation>
    <scope>NUCLEOTIDE SEQUENCE [LARGE SCALE GENOMIC DNA]</scope>
    <source>
        <strain>NG80-2</strain>
    </source>
</reference>
<sequence length="421" mass="46760">MFKFNDEKGQLKCSFCGKTQDQVRKLVAGPGVYICDECIELCTEIVEEELGNEEEFEFKDVPKPVEIREILDEYVIGQDEAKKSLAVAVYNHYKRINSGSKIDDVELSKSNILMIGPTGSGKTLLAQTLARILNVPFAIADATSLTEAGYVGEDVENILLKLIQAADYDVERAEKGIIYIDEIDKIARKSENPSITRDVSGEGVQQALLKILEGTIASVPPQGGRKHPHQEFIQIDTTNILFICGGAFDGIEPIIKRRLGKKVIGFGAEMNQADVDEKNLLSKVLPEDLLKFGLIPEFIGRLPVITTLEPLDEQALIDILTKPKNAIVKQYKKMLELDGVELEFEEAALREIAKKAIERKTGARGLRSIIEGIMLDVMFELPSREDVQKCIITVDTVCGKKPPKLIRHDGTVVEHERKTSA</sequence>
<keyword id="KW-0067">ATP-binding</keyword>
<keyword id="KW-0143">Chaperone</keyword>
<keyword id="KW-0479">Metal-binding</keyword>
<keyword id="KW-0547">Nucleotide-binding</keyword>
<keyword id="KW-0862">Zinc</keyword>
<accession>A4IRH2</accession>
<proteinExistence type="inferred from homology"/>
<organism>
    <name type="scientific">Geobacillus thermodenitrificans (strain NG80-2)</name>
    <dbReference type="NCBI Taxonomy" id="420246"/>
    <lineage>
        <taxon>Bacteria</taxon>
        <taxon>Bacillati</taxon>
        <taxon>Bacillota</taxon>
        <taxon>Bacilli</taxon>
        <taxon>Bacillales</taxon>
        <taxon>Anoxybacillaceae</taxon>
        <taxon>Geobacillus</taxon>
    </lineage>
</organism>
<protein>
    <recommendedName>
        <fullName evidence="1">ATP-dependent Clp protease ATP-binding subunit ClpX</fullName>
    </recommendedName>
</protein>